<reference key="1">
    <citation type="submission" date="2008-12" db="EMBL/GenBank/DDBJ databases">
        <title>Complete sequence of chromosome of Shewanella baltica OS223.</title>
        <authorList>
            <consortium name="US DOE Joint Genome Institute"/>
            <person name="Lucas S."/>
            <person name="Copeland A."/>
            <person name="Lapidus A."/>
            <person name="Glavina del Rio T."/>
            <person name="Dalin E."/>
            <person name="Tice H."/>
            <person name="Bruce D."/>
            <person name="Goodwin L."/>
            <person name="Pitluck S."/>
            <person name="Chertkov O."/>
            <person name="Meincke L."/>
            <person name="Brettin T."/>
            <person name="Detter J.C."/>
            <person name="Han C."/>
            <person name="Kuske C.R."/>
            <person name="Larimer F."/>
            <person name="Land M."/>
            <person name="Hauser L."/>
            <person name="Kyrpides N."/>
            <person name="Ovchinnikova G."/>
            <person name="Brettar I."/>
            <person name="Rodrigues J."/>
            <person name="Konstantinidis K."/>
            <person name="Tiedje J."/>
        </authorList>
    </citation>
    <scope>NUCLEOTIDE SEQUENCE [LARGE SCALE GENOMIC DNA]</scope>
    <source>
        <strain>OS223</strain>
    </source>
</reference>
<keyword id="KW-0030">Aminoacyl-tRNA synthetase</keyword>
<keyword id="KW-0067">ATP-binding</keyword>
<keyword id="KW-0963">Cytoplasm</keyword>
<keyword id="KW-0436">Ligase</keyword>
<keyword id="KW-0547">Nucleotide-binding</keyword>
<keyword id="KW-0648">Protein biosynthesis</keyword>
<gene>
    <name evidence="1" type="primary">leuS</name>
    <name type="ordered locus">Sbal223_1098</name>
</gene>
<comment type="catalytic activity">
    <reaction evidence="1">
        <text>tRNA(Leu) + L-leucine + ATP = L-leucyl-tRNA(Leu) + AMP + diphosphate</text>
        <dbReference type="Rhea" id="RHEA:11688"/>
        <dbReference type="Rhea" id="RHEA-COMP:9613"/>
        <dbReference type="Rhea" id="RHEA-COMP:9622"/>
        <dbReference type="ChEBI" id="CHEBI:30616"/>
        <dbReference type="ChEBI" id="CHEBI:33019"/>
        <dbReference type="ChEBI" id="CHEBI:57427"/>
        <dbReference type="ChEBI" id="CHEBI:78442"/>
        <dbReference type="ChEBI" id="CHEBI:78494"/>
        <dbReference type="ChEBI" id="CHEBI:456215"/>
        <dbReference type="EC" id="6.1.1.4"/>
    </reaction>
</comment>
<comment type="subcellular location">
    <subcellularLocation>
        <location evidence="1">Cytoplasm</location>
    </subcellularLocation>
</comment>
<comment type="similarity">
    <text evidence="1">Belongs to the class-I aminoacyl-tRNA synthetase family.</text>
</comment>
<accession>B8E4X7</accession>
<organism>
    <name type="scientific">Shewanella baltica (strain OS223)</name>
    <dbReference type="NCBI Taxonomy" id="407976"/>
    <lineage>
        <taxon>Bacteria</taxon>
        <taxon>Pseudomonadati</taxon>
        <taxon>Pseudomonadota</taxon>
        <taxon>Gammaproteobacteria</taxon>
        <taxon>Alteromonadales</taxon>
        <taxon>Shewanellaceae</taxon>
        <taxon>Shewanella</taxon>
    </lineage>
</organism>
<sequence>MQEQYNPSEIEALVQKHWHDNKTFEVTEDANKEKFYCLSMFPYPSGRLHMGHVRNYTIGDVVARFQRLQGKNVLQPIGWDSFGLPAENAAINNKTAPAPWTYENIEYMKNQLKLLGFGYDWSREIATCTPEYYRWEQWFFTKLYEKGLVYKKTASVNWCPNDETVLANEQVQDGCCWRCDTPVEQKEIPQWFIKITAYAEELLNDIDTLDGWPDQVKTMQRNWIGRSEGVEMTFGVAGHDKSFDIYTTRPDTLMGVTYVAIAAGHPLAEIAAHTNPELAAFIDECKNSTTSEAELATMEKRGVATGLFAIHPITGKQVPIWAANFVLMNYGTGAVMSVPGHDQRDFEFAKKYGLAIEAVIKPVDGDVDISEAAYTEKGVLFNSGEFDGLDFEAGFNAIANKLVAEGKGKRQVNYRLRDWGVSRQRYWGAPIPMVTLADGTVIPTPADQLPVLLPEDVVMDGIQSPIKADKEWAKTQVNGQDALRETDTFDTFMESSWYYARYCSPHADEMLDPAKANYWLPVDQYIGGIEHACMHLLYFRFFHKLLRDAGLVNSNEPAKQLLTQGMVLADAFYYINEKGARVWVSPLDVATTEKDDKGRITKAIDKDGNELVYTGMSKMSKSKNNGIDPQVMVEKYGADTVRLFMMFASPPELTLEWQESGVEGAHRFIKRLWKLANEHVNQDNSEALDVSTLTSDQKALRREVHKTIAKVTDDIGRRQMFNTAVAAVMELMNHLQKAPQTTGQDNAIIGEALSAIVRLLYPIIPHVSFNLWNELGNASNIEDSQWPVVDEAALVEDSKLIVVQVNGKVRAKITVAADADKESVEALGMIDEHVIKYLDGLTVRKVIYVPGKLLSIVAN</sequence>
<proteinExistence type="inferred from homology"/>
<evidence type="ECO:0000255" key="1">
    <source>
        <dbReference type="HAMAP-Rule" id="MF_00049"/>
    </source>
</evidence>
<protein>
    <recommendedName>
        <fullName evidence="1">Leucine--tRNA ligase</fullName>
        <ecNumber evidence="1">6.1.1.4</ecNumber>
    </recommendedName>
    <alternativeName>
        <fullName evidence="1">Leucyl-tRNA synthetase</fullName>
        <shortName evidence="1">LeuRS</shortName>
    </alternativeName>
</protein>
<dbReference type="EC" id="6.1.1.4" evidence="1"/>
<dbReference type="EMBL" id="CP001252">
    <property type="protein sequence ID" value="ACK45613.1"/>
    <property type="molecule type" value="Genomic_DNA"/>
</dbReference>
<dbReference type="RefSeq" id="WP_012587019.1">
    <property type="nucleotide sequence ID" value="NC_011663.1"/>
</dbReference>
<dbReference type="SMR" id="B8E4X7"/>
<dbReference type="KEGG" id="sbp:Sbal223_1098"/>
<dbReference type="HOGENOM" id="CLU_004427_0_0_6"/>
<dbReference type="Proteomes" id="UP000002507">
    <property type="component" value="Chromosome"/>
</dbReference>
<dbReference type="GO" id="GO:0005829">
    <property type="term" value="C:cytosol"/>
    <property type="evidence" value="ECO:0007669"/>
    <property type="project" value="TreeGrafter"/>
</dbReference>
<dbReference type="GO" id="GO:0002161">
    <property type="term" value="F:aminoacyl-tRNA deacylase activity"/>
    <property type="evidence" value="ECO:0007669"/>
    <property type="project" value="InterPro"/>
</dbReference>
<dbReference type="GO" id="GO:0005524">
    <property type="term" value="F:ATP binding"/>
    <property type="evidence" value="ECO:0007669"/>
    <property type="project" value="UniProtKB-UniRule"/>
</dbReference>
<dbReference type="GO" id="GO:0004823">
    <property type="term" value="F:leucine-tRNA ligase activity"/>
    <property type="evidence" value="ECO:0007669"/>
    <property type="project" value="UniProtKB-UniRule"/>
</dbReference>
<dbReference type="GO" id="GO:0006429">
    <property type="term" value="P:leucyl-tRNA aminoacylation"/>
    <property type="evidence" value="ECO:0007669"/>
    <property type="project" value="UniProtKB-UniRule"/>
</dbReference>
<dbReference type="CDD" id="cd07958">
    <property type="entry name" value="Anticodon_Ia_Leu_BEm"/>
    <property type="match status" value="1"/>
</dbReference>
<dbReference type="CDD" id="cd00812">
    <property type="entry name" value="LeuRS_core"/>
    <property type="match status" value="1"/>
</dbReference>
<dbReference type="FunFam" id="1.10.730.10:FF:000003">
    <property type="entry name" value="Leucine--tRNA ligase"/>
    <property type="match status" value="1"/>
</dbReference>
<dbReference type="FunFam" id="2.20.28.290:FF:000001">
    <property type="entry name" value="Leucine--tRNA ligase"/>
    <property type="match status" value="1"/>
</dbReference>
<dbReference type="FunFam" id="3.10.20.590:FF:000001">
    <property type="entry name" value="Leucine--tRNA ligase"/>
    <property type="match status" value="1"/>
</dbReference>
<dbReference type="FunFam" id="3.40.50.620:FF:000003">
    <property type="entry name" value="Leucine--tRNA ligase"/>
    <property type="match status" value="1"/>
</dbReference>
<dbReference type="FunFam" id="3.40.50.620:FF:000124">
    <property type="entry name" value="Leucine--tRNA ligase"/>
    <property type="match status" value="1"/>
</dbReference>
<dbReference type="FunFam" id="3.90.740.10:FF:000012">
    <property type="entry name" value="Leucine--tRNA ligase"/>
    <property type="match status" value="1"/>
</dbReference>
<dbReference type="Gene3D" id="2.20.28.290">
    <property type="match status" value="1"/>
</dbReference>
<dbReference type="Gene3D" id="3.10.20.590">
    <property type="match status" value="1"/>
</dbReference>
<dbReference type="Gene3D" id="3.40.50.620">
    <property type="entry name" value="HUPs"/>
    <property type="match status" value="2"/>
</dbReference>
<dbReference type="Gene3D" id="1.10.730.10">
    <property type="entry name" value="Isoleucyl-tRNA Synthetase, Domain 1"/>
    <property type="match status" value="2"/>
</dbReference>
<dbReference type="HAMAP" id="MF_00049_B">
    <property type="entry name" value="Leu_tRNA_synth_B"/>
    <property type="match status" value="1"/>
</dbReference>
<dbReference type="InterPro" id="IPR001412">
    <property type="entry name" value="aa-tRNA-synth_I_CS"/>
</dbReference>
<dbReference type="InterPro" id="IPR002300">
    <property type="entry name" value="aa-tRNA-synth_Ia"/>
</dbReference>
<dbReference type="InterPro" id="IPR002302">
    <property type="entry name" value="Leu-tRNA-ligase"/>
</dbReference>
<dbReference type="InterPro" id="IPR025709">
    <property type="entry name" value="Leu_tRNA-synth_edit"/>
</dbReference>
<dbReference type="InterPro" id="IPR013155">
    <property type="entry name" value="M/V/L/I-tRNA-synth_anticd-bd"/>
</dbReference>
<dbReference type="InterPro" id="IPR015413">
    <property type="entry name" value="Methionyl/Leucyl_tRNA_Synth"/>
</dbReference>
<dbReference type="InterPro" id="IPR014729">
    <property type="entry name" value="Rossmann-like_a/b/a_fold"/>
</dbReference>
<dbReference type="InterPro" id="IPR009080">
    <property type="entry name" value="tRNAsynth_Ia_anticodon-bd"/>
</dbReference>
<dbReference type="InterPro" id="IPR009008">
    <property type="entry name" value="Val/Leu/Ile-tRNA-synth_edit"/>
</dbReference>
<dbReference type="NCBIfam" id="TIGR00396">
    <property type="entry name" value="leuS_bact"/>
    <property type="match status" value="1"/>
</dbReference>
<dbReference type="PANTHER" id="PTHR43740:SF2">
    <property type="entry name" value="LEUCINE--TRNA LIGASE, MITOCHONDRIAL"/>
    <property type="match status" value="1"/>
</dbReference>
<dbReference type="PANTHER" id="PTHR43740">
    <property type="entry name" value="LEUCYL-TRNA SYNTHETASE"/>
    <property type="match status" value="1"/>
</dbReference>
<dbReference type="Pfam" id="PF08264">
    <property type="entry name" value="Anticodon_1"/>
    <property type="match status" value="1"/>
</dbReference>
<dbReference type="Pfam" id="PF00133">
    <property type="entry name" value="tRNA-synt_1"/>
    <property type="match status" value="2"/>
</dbReference>
<dbReference type="Pfam" id="PF13603">
    <property type="entry name" value="tRNA-synt_1_2"/>
    <property type="match status" value="1"/>
</dbReference>
<dbReference type="Pfam" id="PF09334">
    <property type="entry name" value="tRNA-synt_1g"/>
    <property type="match status" value="1"/>
</dbReference>
<dbReference type="PRINTS" id="PR00985">
    <property type="entry name" value="TRNASYNTHLEU"/>
</dbReference>
<dbReference type="SUPFAM" id="SSF47323">
    <property type="entry name" value="Anticodon-binding domain of a subclass of class I aminoacyl-tRNA synthetases"/>
    <property type="match status" value="1"/>
</dbReference>
<dbReference type="SUPFAM" id="SSF52374">
    <property type="entry name" value="Nucleotidylyl transferase"/>
    <property type="match status" value="1"/>
</dbReference>
<dbReference type="SUPFAM" id="SSF50677">
    <property type="entry name" value="ValRS/IleRS/LeuRS editing domain"/>
    <property type="match status" value="1"/>
</dbReference>
<dbReference type="PROSITE" id="PS00178">
    <property type="entry name" value="AA_TRNA_LIGASE_I"/>
    <property type="match status" value="1"/>
</dbReference>
<name>SYL_SHEB2</name>
<feature type="chain" id="PRO_1000199223" description="Leucine--tRNA ligase">
    <location>
        <begin position="1"/>
        <end position="859"/>
    </location>
</feature>
<feature type="short sequence motif" description="'HIGH' region">
    <location>
        <begin position="42"/>
        <end position="52"/>
    </location>
</feature>
<feature type="short sequence motif" description="'KMSKS' region">
    <location>
        <begin position="618"/>
        <end position="622"/>
    </location>
</feature>
<feature type="binding site" evidence="1">
    <location>
        <position position="621"/>
    </location>
    <ligand>
        <name>ATP</name>
        <dbReference type="ChEBI" id="CHEBI:30616"/>
    </ligand>
</feature>